<sequence>MYIPESIGTPLTPNATKVMLLGSGELGKEVAIAFQRLGLEVHAVDRYEHAPAHQVAHFSYVIDMTDAAQVRELVERVRPDFVIPEIEALATDELVKIEEEGLATIVPTARAAKLTMNREGIRKLAAEELGLPTSNYEFCSTFEEFSAAAEKLGYPNVVKPVMSSSGKGQSVLRSSDDLQAAWDYAMSGARVANSRVIVEAFVEFDYEITLLTVRSIDPTTSKPATWFCEPIGHRQEDGDYVESWQPMEMTPRALENARSVAARITNALGGRGVFGVELFVSGDDVYFSEVSPRPHDTGLVTLATQRFSEFELHAKAILGLPVDVTLISPGASAVIYGGIESEGVSYTGLAEALAVAETDLRIFAKPEAFTKRRMGVAVSTAEDVAAARDRATLAAAAIKVHPGNSAEA</sequence>
<comment type="function">
    <text evidence="1">Involved in the de novo purine biosynthesis. Catalyzes the transfer of formate to 5-phospho-ribosyl-glycinamide (GAR), producing 5-phospho-ribosyl-N-formylglycinamide (FGAR). Formate is provided by PurU via hydrolysis of 10-formyl-tetrahydrofolate.</text>
</comment>
<comment type="catalytic activity">
    <reaction evidence="1">
        <text>N(1)-(5-phospho-beta-D-ribosyl)glycinamide + formate + ATP = N(2)-formyl-N(1)-(5-phospho-beta-D-ribosyl)glycinamide + ADP + phosphate + H(+)</text>
        <dbReference type="Rhea" id="RHEA:24829"/>
        <dbReference type="ChEBI" id="CHEBI:15378"/>
        <dbReference type="ChEBI" id="CHEBI:15740"/>
        <dbReference type="ChEBI" id="CHEBI:30616"/>
        <dbReference type="ChEBI" id="CHEBI:43474"/>
        <dbReference type="ChEBI" id="CHEBI:143788"/>
        <dbReference type="ChEBI" id="CHEBI:147286"/>
        <dbReference type="ChEBI" id="CHEBI:456216"/>
        <dbReference type="EC" id="6.3.1.21"/>
    </reaction>
    <physiologicalReaction direction="left-to-right" evidence="1">
        <dbReference type="Rhea" id="RHEA:24830"/>
    </physiologicalReaction>
</comment>
<comment type="pathway">
    <text evidence="1">Purine metabolism; IMP biosynthesis via de novo pathway; N(2)-formyl-N(1)-(5-phospho-D-ribosyl)glycinamide from N(1)-(5-phospho-D-ribosyl)glycinamide (formate route): step 1/1.</text>
</comment>
<comment type="subunit">
    <text evidence="1">Homodimer.</text>
</comment>
<comment type="similarity">
    <text evidence="1">Belongs to the PurK/PurT family.</text>
</comment>
<keyword id="KW-0067">ATP-binding</keyword>
<keyword id="KW-0436">Ligase</keyword>
<keyword id="KW-0460">Magnesium</keyword>
<keyword id="KW-0479">Metal-binding</keyword>
<keyword id="KW-0547">Nucleotide-binding</keyword>
<keyword id="KW-0658">Purine biosynthesis</keyword>
<gene>
    <name evidence="1" type="primary">purT</name>
    <name type="ordered locus">cgR_2662</name>
</gene>
<reference key="1">
    <citation type="journal article" date="2007" name="Microbiology">
        <title>Comparative analysis of the Corynebacterium glutamicum group and complete genome sequence of strain R.</title>
        <authorList>
            <person name="Yukawa H."/>
            <person name="Omumasaba C.A."/>
            <person name="Nonaka H."/>
            <person name="Kos P."/>
            <person name="Okai N."/>
            <person name="Suzuki N."/>
            <person name="Suda M."/>
            <person name="Tsuge Y."/>
            <person name="Watanabe J."/>
            <person name="Ikeda Y."/>
            <person name="Vertes A.A."/>
            <person name="Inui M."/>
        </authorList>
    </citation>
    <scope>NUCLEOTIDE SEQUENCE [LARGE SCALE GENOMIC DNA]</scope>
    <source>
        <strain>R</strain>
    </source>
</reference>
<dbReference type="EC" id="6.3.1.21" evidence="1"/>
<dbReference type="EMBL" id="AP009044">
    <property type="protein sequence ID" value="BAF55677.1"/>
    <property type="molecule type" value="Genomic_DNA"/>
</dbReference>
<dbReference type="RefSeq" id="WP_003853648.1">
    <property type="nucleotide sequence ID" value="NC_009342.1"/>
</dbReference>
<dbReference type="SMR" id="A4QHG1"/>
<dbReference type="GeneID" id="1020704"/>
<dbReference type="KEGG" id="cgt:cgR_2662"/>
<dbReference type="HOGENOM" id="CLU_011534_1_3_11"/>
<dbReference type="PhylomeDB" id="A4QHG1"/>
<dbReference type="UniPathway" id="UPA00074">
    <property type="reaction ID" value="UER00127"/>
</dbReference>
<dbReference type="Proteomes" id="UP000006698">
    <property type="component" value="Chromosome"/>
</dbReference>
<dbReference type="GO" id="GO:0005829">
    <property type="term" value="C:cytosol"/>
    <property type="evidence" value="ECO:0007669"/>
    <property type="project" value="TreeGrafter"/>
</dbReference>
<dbReference type="GO" id="GO:0005524">
    <property type="term" value="F:ATP binding"/>
    <property type="evidence" value="ECO:0007669"/>
    <property type="project" value="UniProtKB-UniRule"/>
</dbReference>
<dbReference type="GO" id="GO:0000287">
    <property type="term" value="F:magnesium ion binding"/>
    <property type="evidence" value="ECO:0007669"/>
    <property type="project" value="InterPro"/>
</dbReference>
<dbReference type="GO" id="GO:0043815">
    <property type="term" value="F:phosphoribosylglycinamide formyltransferase 2 activity"/>
    <property type="evidence" value="ECO:0007669"/>
    <property type="project" value="UniProtKB-UniRule"/>
</dbReference>
<dbReference type="GO" id="GO:0004644">
    <property type="term" value="F:phosphoribosylglycinamide formyltransferase activity"/>
    <property type="evidence" value="ECO:0007669"/>
    <property type="project" value="InterPro"/>
</dbReference>
<dbReference type="GO" id="GO:0006189">
    <property type="term" value="P:'de novo' IMP biosynthetic process"/>
    <property type="evidence" value="ECO:0007669"/>
    <property type="project" value="UniProtKB-UniRule"/>
</dbReference>
<dbReference type="FunFam" id="3.30.1490.20:FF:000013">
    <property type="entry name" value="Formate-dependent phosphoribosylglycinamide formyltransferase"/>
    <property type="match status" value="1"/>
</dbReference>
<dbReference type="Gene3D" id="3.40.50.20">
    <property type="match status" value="1"/>
</dbReference>
<dbReference type="Gene3D" id="3.30.1490.20">
    <property type="entry name" value="ATP-grasp fold, A domain"/>
    <property type="match status" value="1"/>
</dbReference>
<dbReference type="Gene3D" id="3.30.470.20">
    <property type="entry name" value="ATP-grasp fold, B domain"/>
    <property type="match status" value="1"/>
</dbReference>
<dbReference type="HAMAP" id="MF_01643">
    <property type="entry name" value="PurT"/>
    <property type="match status" value="1"/>
</dbReference>
<dbReference type="InterPro" id="IPR011761">
    <property type="entry name" value="ATP-grasp"/>
</dbReference>
<dbReference type="InterPro" id="IPR003135">
    <property type="entry name" value="ATP-grasp_carboxylate-amine"/>
</dbReference>
<dbReference type="InterPro" id="IPR013815">
    <property type="entry name" value="ATP_grasp_subdomain_1"/>
</dbReference>
<dbReference type="InterPro" id="IPR016185">
    <property type="entry name" value="PreATP-grasp_dom_sf"/>
</dbReference>
<dbReference type="InterPro" id="IPR005862">
    <property type="entry name" value="PurT"/>
</dbReference>
<dbReference type="InterPro" id="IPR054350">
    <property type="entry name" value="PurT/PurK_preATP-grasp"/>
</dbReference>
<dbReference type="InterPro" id="IPR048740">
    <property type="entry name" value="PurT_C"/>
</dbReference>
<dbReference type="InterPro" id="IPR011054">
    <property type="entry name" value="Rudment_hybrid_motif"/>
</dbReference>
<dbReference type="NCBIfam" id="NF006766">
    <property type="entry name" value="PRK09288.1"/>
    <property type="match status" value="1"/>
</dbReference>
<dbReference type="NCBIfam" id="TIGR01142">
    <property type="entry name" value="purT"/>
    <property type="match status" value="1"/>
</dbReference>
<dbReference type="PANTHER" id="PTHR43055">
    <property type="entry name" value="FORMATE-DEPENDENT PHOSPHORIBOSYLGLYCINAMIDE FORMYLTRANSFERASE"/>
    <property type="match status" value="1"/>
</dbReference>
<dbReference type="PANTHER" id="PTHR43055:SF1">
    <property type="entry name" value="FORMATE-DEPENDENT PHOSPHORIBOSYLGLYCINAMIDE FORMYLTRANSFERASE"/>
    <property type="match status" value="1"/>
</dbReference>
<dbReference type="Pfam" id="PF02222">
    <property type="entry name" value="ATP-grasp"/>
    <property type="match status" value="1"/>
</dbReference>
<dbReference type="Pfam" id="PF21244">
    <property type="entry name" value="PurT_C"/>
    <property type="match status" value="1"/>
</dbReference>
<dbReference type="Pfam" id="PF22660">
    <property type="entry name" value="RS_preATP-grasp-like"/>
    <property type="match status" value="1"/>
</dbReference>
<dbReference type="SUPFAM" id="SSF56059">
    <property type="entry name" value="Glutathione synthetase ATP-binding domain-like"/>
    <property type="match status" value="1"/>
</dbReference>
<dbReference type="SUPFAM" id="SSF52440">
    <property type="entry name" value="PreATP-grasp domain"/>
    <property type="match status" value="1"/>
</dbReference>
<dbReference type="SUPFAM" id="SSF51246">
    <property type="entry name" value="Rudiment single hybrid motif"/>
    <property type="match status" value="1"/>
</dbReference>
<dbReference type="PROSITE" id="PS50975">
    <property type="entry name" value="ATP_GRASP"/>
    <property type="match status" value="1"/>
</dbReference>
<name>PURT_CORGB</name>
<protein>
    <recommendedName>
        <fullName evidence="1">Formate-dependent phosphoribosylglycinamide formyltransferase</fullName>
        <ecNumber evidence="1">6.3.1.21</ecNumber>
    </recommendedName>
    <alternativeName>
        <fullName evidence="1">5'-phosphoribosylglycinamide transformylase 2</fullName>
    </alternativeName>
    <alternativeName>
        <fullName evidence="1">Formate-dependent GAR transformylase</fullName>
    </alternativeName>
    <alternativeName>
        <fullName evidence="1">GAR transformylase 2</fullName>
        <shortName evidence="1">GART 2</shortName>
    </alternativeName>
    <alternativeName>
        <fullName evidence="1">Non-folate glycinamide ribonucleotide transformylase</fullName>
    </alternativeName>
    <alternativeName>
        <fullName evidence="1">Phosphoribosylglycinamide formyltransferase 2</fullName>
    </alternativeName>
</protein>
<organism>
    <name type="scientific">Corynebacterium glutamicum (strain R)</name>
    <dbReference type="NCBI Taxonomy" id="340322"/>
    <lineage>
        <taxon>Bacteria</taxon>
        <taxon>Bacillati</taxon>
        <taxon>Actinomycetota</taxon>
        <taxon>Actinomycetes</taxon>
        <taxon>Mycobacteriales</taxon>
        <taxon>Corynebacteriaceae</taxon>
        <taxon>Corynebacterium</taxon>
    </lineage>
</organism>
<feature type="chain" id="PRO_0000319153" description="Formate-dependent phosphoribosylglycinamide formyltransferase">
    <location>
        <begin position="1"/>
        <end position="408"/>
    </location>
</feature>
<feature type="domain" description="ATP-grasp" evidence="1">
    <location>
        <begin position="123"/>
        <end position="318"/>
    </location>
</feature>
<feature type="binding site" evidence="1">
    <location>
        <begin position="25"/>
        <end position="26"/>
    </location>
    <ligand>
        <name>N(1)-(5-phospho-beta-D-ribosyl)glycinamide</name>
        <dbReference type="ChEBI" id="CHEBI:143788"/>
    </ligand>
</feature>
<feature type="binding site" evidence="1">
    <location>
        <position position="85"/>
    </location>
    <ligand>
        <name>N(1)-(5-phospho-beta-D-ribosyl)glycinamide</name>
        <dbReference type="ChEBI" id="CHEBI:143788"/>
    </ligand>
</feature>
<feature type="binding site" evidence="1">
    <location>
        <position position="118"/>
    </location>
    <ligand>
        <name>ATP</name>
        <dbReference type="ChEBI" id="CHEBI:30616"/>
    </ligand>
</feature>
<feature type="binding site" evidence="1">
    <location>
        <position position="159"/>
    </location>
    <ligand>
        <name>ATP</name>
        <dbReference type="ChEBI" id="CHEBI:30616"/>
    </ligand>
</feature>
<feature type="binding site" evidence="1">
    <location>
        <begin position="164"/>
        <end position="169"/>
    </location>
    <ligand>
        <name>ATP</name>
        <dbReference type="ChEBI" id="CHEBI:30616"/>
    </ligand>
</feature>
<feature type="binding site" evidence="1">
    <location>
        <begin position="199"/>
        <end position="202"/>
    </location>
    <ligand>
        <name>ATP</name>
        <dbReference type="ChEBI" id="CHEBI:30616"/>
    </ligand>
</feature>
<feature type="binding site" evidence="1">
    <location>
        <position position="207"/>
    </location>
    <ligand>
        <name>ATP</name>
        <dbReference type="ChEBI" id="CHEBI:30616"/>
    </ligand>
</feature>
<feature type="binding site" evidence="1">
    <location>
        <position position="277"/>
    </location>
    <ligand>
        <name>Mg(2+)</name>
        <dbReference type="ChEBI" id="CHEBI:18420"/>
    </ligand>
</feature>
<feature type="binding site" evidence="1">
    <location>
        <position position="289"/>
    </location>
    <ligand>
        <name>Mg(2+)</name>
        <dbReference type="ChEBI" id="CHEBI:18420"/>
    </ligand>
</feature>
<feature type="binding site" evidence="1">
    <location>
        <position position="296"/>
    </location>
    <ligand>
        <name>N(1)-(5-phospho-beta-D-ribosyl)glycinamide</name>
        <dbReference type="ChEBI" id="CHEBI:143788"/>
    </ligand>
</feature>
<feature type="binding site" evidence="1">
    <location>
        <position position="365"/>
    </location>
    <ligand>
        <name>N(1)-(5-phospho-beta-D-ribosyl)glycinamide</name>
        <dbReference type="ChEBI" id="CHEBI:143788"/>
    </ligand>
</feature>
<feature type="binding site" evidence="1">
    <location>
        <begin position="372"/>
        <end position="373"/>
    </location>
    <ligand>
        <name>N(1)-(5-phospho-beta-D-ribosyl)glycinamide</name>
        <dbReference type="ChEBI" id="CHEBI:143788"/>
    </ligand>
</feature>
<evidence type="ECO:0000255" key="1">
    <source>
        <dbReference type="HAMAP-Rule" id="MF_01643"/>
    </source>
</evidence>
<proteinExistence type="inferred from homology"/>
<accession>A4QHG1</accession>